<dbReference type="PIR" id="A04348">
    <property type="entry name" value="A04348"/>
</dbReference>
<comment type="function">
    <text>Gp22 functions in head assembly.</text>
</comment>
<comment type="function">
    <text>Internal peptide VII: Cleavage product of Gp22 that is incorporated into the mature phage head.</text>
</comment>
<keyword id="KW-0903">Direct protein sequencing</keyword>
<accession>P21596</accession>
<reference key="1">
    <citation type="journal article" date="1977" name="J. Mol. Biol.">
        <title>Primary structure of internal peptide VII of T-even bacteriophages.</title>
        <authorList>
            <person name="van Eerd J.P."/>
            <person name="Champe S.P."/>
            <person name="Yager L."/>
            <person name="Kubota I."/>
            <person name="Tsugita A."/>
        </authorList>
    </citation>
    <scope>PROTEIN SEQUENCE</scope>
</reference>
<feature type="peptide" id="PRO_0000003336" description="Internal peptide VII">
    <location>
        <begin position="1"/>
        <end position="23"/>
    </location>
</feature>
<feature type="region of interest" description="Disordered" evidence="1">
    <location>
        <begin position="1"/>
        <end position="23"/>
    </location>
</feature>
<feature type="compositionally biased region" description="Basic and acidic residues" evidence="1">
    <location>
        <begin position="7"/>
        <end position="23"/>
    </location>
</feature>
<feature type="non-terminal residue">
    <location>
        <position position="1"/>
    </location>
</feature>
<feature type="non-terminal residue">
    <location>
        <position position="23"/>
    </location>
</feature>
<sequence length="23" mass="2690">KAEEEVEKNKEEAEEEAEKKIAE</sequence>
<organism>
    <name type="scientific">Enterobacteria phage T2</name>
    <name type="common">Bacteriophage T2</name>
    <dbReference type="NCBI Taxonomy" id="2060721"/>
    <lineage>
        <taxon>Viruses</taxon>
        <taxon>Duplodnaviria</taxon>
        <taxon>Heunggongvirae</taxon>
        <taxon>Uroviricota</taxon>
        <taxon>Caudoviricetes</taxon>
        <taxon>Straboviridae</taxon>
        <taxon>Tevenvirinae</taxon>
        <taxon>Tequatrovirus</taxon>
        <taxon>Tequatrovirus T2</taxon>
    </lineage>
</organism>
<name>VG22_BPT2</name>
<proteinExistence type="evidence at protein level"/>
<protein>
    <recommendedName>
        <fullName>Major prohead-scaffolding core protein Gp22</fullName>
    </recommendedName>
    <component>
        <recommendedName>
            <fullName>Internal peptide VII</fullName>
        </recommendedName>
    </component>
</protein>
<evidence type="ECO:0000256" key="1">
    <source>
        <dbReference type="SAM" id="MobiDB-lite"/>
    </source>
</evidence>
<gene>
    <name type="primary">22</name>
</gene>
<organismHost>
    <name type="scientific">Escherichia coli</name>
    <dbReference type="NCBI Taxonomy" id="562"/>
</organismHost>